<protein>
    <recommendedName>
        <fullName evidence="1">FMN-dependent NADH:quinone oxidoreductase</fullName>
        <ecNumber evidence="1">1.6.5.-</ecNumber>
    </recommendedName>
    <alternativeName>
        <fullName evidence="1">Azo-dye reductase</fullName>
    </alternativeName>
    <alternativeName>
        <fullName evidence="1">FMN-dependent NADH-azo compound oxidoreductase</fullName>
    </alternativeName>
    <alternativeName>
        <fullName evidence="1">FMN-dependent NADH-azoreductase</fullName>
        <ecNumber evidence="1">1.7.1.17</ecNumber>
    </alternativeName>
</protein>
<gene>
    <name evidence="1" type="primary">azoR</name>
    <name type="ordered locus">CV_2016</name>
</gene>
<proteinExistence type="inferred from homology"/>
<dbReference type="EC" id="1.6.5.-" evidence="1"/>
<dbReference type="EC" id="1.7.1.17" evidence="1"/>
<dbReference type="EMBL" id="AE016825">
    <property type="protein sequence ID" value="AAQ59688.1"/>
    <property type="molecule type" value="Genomic_DNA"/>
</dbReference>
<dbReference type="RefSeq" id="WP_011135564.1">
    <property type="nucleotide sequence ID" value="NC_005085.1"/>
</dbReference>
<dbReference type="SMR" id="Q7NWH3"/>
<dbReference type="STRING" id="243365.CV_2016"/>
<dbReference type="KEGG" id="cvi:CV_2016"/>
<dbReference type="eggNOG" id="COG1182">
    <property type="taxonomic scope" value="Bacteria"/>
</dbReference>
<dbReference type="HOGENOM" id="CLU_088964_0_0_4"/>
<dbReference type="OrthoDB" id="9787136at2"/>
<dbReference type="Proteomes" id="UP000001424">
    <property type="component" value="Chromosome"/>
</dbReference>
<dbReference type="GO" id="GO:0009055">
    <property type="term" value="F:electron transfer activity"/>
    <property type="evidence" value="ECO:0007669"/>
    <property type="project" value="UniProtKB-UniRule"/>
</dbReference>
<dbReference type="GO" id="GO:0010181">
    <property type="term" value="F:FMN binding"/>
    <property type="evidence" value="ECO:0007669"/>
    <property type="project" value="UniProtKB-UniRule"/>
</dbReference>
<dbReference type="GO" id="GO:0016652">
    <property type="term" value="F:oxidoreductase activity, acting on NAD(P)H as acceptor"/>
    <property type="evidence" value="ECO:0007669"/>
    <property type="project" value="UniProtKB-UniRule"/>
</dbReference>
<dbReference type="GO" id="GO:0016655">
    <property type="term" value="F:oxidoreductase activity, acting on NAD(P)H, quinone or similar compound as acceptor"/>
    <property type="evidence" value="ECO:0007669"/>
    <property type="project" value="InterPro"/>
</dbReference>
<dbReference type="Gene3D" id="3.40.50.360">
    <property type="match status" value="1"/>
</dbReference>
<dbReference type="HAMAP" id="MF_01216">
    <property type="entry name" value="Azoreductase_type1"/>
    <property type="match status" value="1"/>
</dbReference>
<dbReference type="InterPro" id="IPR003680">
    <property type="entry name" value="Flavodoxin_fold"/>
</dbReference>
<dbReference type="InterPro" id="IPR029039">
    <property type="entry name" value="Flavoprotein-like_sf"/>
</dbReference>
<dbReference type="InterPro" id="IPR050104">
    <property type="entry name" value="FMN-dep_NADH:Q_OxRdtase_AzoR1"/>
</dbReference>
<dbReference type="InterPro" id="IPR023048">
    <property type="entry name" value="NADH:quinone_OxRdtase_FMN_depd"/>
</dbReference>
<dbReference type="PANTHER" id="PTHR43741">
    <property type="entry name" value="FMN-DEPENDENT NADH-AZOREDUCTASE 1"/>
    <property type="match status" value="1"/>
</dbReference>
<dbReference type="PANTHER" id="PTHR43741:SF4">
    <property type="entry name" value="FMN-DEPENDENT NADH:QUINONE OXIDOREDUCTASE"/>
    <property type="match status" value="1"/>
</dbReference>
<dbReference type="Pfam" id="PF02525">
    <property type="entry name" value="Flavodoxin_2"/>
    <property type="match status" value="1"/>
</dbReference>
<dbReference type="SUPFAM" id="SSF52218">
    <property type="entry name" value="Flavoproteins"/>
    <property type="match status" value="1"/>
</dbReference>
<keyword id="KW-0285">Flavoprotein</keyword>
<keyword id="KW-0288">FMN</keyword>
<keyword id="KW-0520">NAD</keyword>
<keyword id="KW-0560">Oxidoreductase</keyword>
<keyword id="KW-1185">Reference proteome</keyword>
<comment type="function">
    <text evidence="1">Quinone reductase that provides resistance to thiol-specific stress caused by electrophilic quinones.</text>
</comment>
<comment type="function">
    <text evidence="1">Also exhibits azoreductase activity. Catalyzes the reductive cleavage of the azo bond in aromatic azo compounds to the corresponding amines.</text>
</comment>
<comment type="catalytic activity">
    <reaction evidence="1">
        <text>2 a quinone + NADH + H(+) = 2 a 1,4-benzosemiquinone + NAD(+)</text>
        <dbReference type="Rhea" id="RHEA:65952"/>
        <dbReference type="ChEBI" id="CHEBI:15378"/>
        <dbReference type="ChEBI" id="CHEBI:57540"/>
        <dbReference type="ChEBI" id="CHEBI:57945"/>
        <dbReference type="ChEBI" id="CHEBI:132124"/>
        <dbReference type="ChEBI" id="CHEBI:134225"/>
    </reaction>
</comment>
<comment type="catalytic activity">
    <reaction evidence="1">
        <text>N,N-dimethyl-1,4-phenylenediamine + anthranilate + 2 NAD(+) = 2-(4-dimethylaminophenyl)diazenylbenzoate + 2 NADH + 2 H(+)</text>
        <dbReference type="Rhea" id="RHEA:55872"/>
        <dbReference type="ChEBI" id="CHEBI:15378"/>
        <dbReference type="ChEBI" id="CHEBI:15783"/>
        <dbReference type="ChEBI" id="CHEBI:16567"/>
        <dbReference type="ChEBI" id="CHEBI:57540"/>
        <dbReference type="ChEBI" id="CHEBI:57945"/>
        <dbReference type="ChEBI" id="CHEBI:71579"/>
        <dbReference type="EC" id="1.7.1.17"/>
    </reaction>
</comment>
<comment type="cofactor">
    <cofactor evidence="1">
        <name>FMN</name>
        <dbReference type="ChEBI" id="CHEBI:58210"/>
    </cofactor>
    <text evidence="1">Binds 1 FMN per subunit.</text>
</comment>
<comment type="subunit">
    <text evidence="1">Homodimer.</text>
</comment>
<comment type="similarity">
    <text evidence="1">Belongs to the azoreductase type 1 family.</text>
</comment>
<organism>
    <name type="scientific">Chromobacterium violaceum (strain ATCC 12472 / DSM 30191 / JCM 1249 / CCUG 213 / NBRC 12614 / NCIMB 9131 / NCTC 9757 / MK)</name>
    <dbReference type="NCBI Taxonomy" id="243365"/>
    <lineage>
        <taxon>Bacteria</taxon>
        <taxon>Pseudomonadati</taxon>
        <taxon>Pseudomonadota</taxon>
        <taxon>Betaproteobacteria</taxon>
        <taxon>Neisseriales</taxon>
        <taxon>Chromobacteriaceae</taxon>
        <taxon>Chromobacterium</taxon>
    </lineage>
</organism>
<evidence type="ECO:0000255" key="1">
    <source>
        <dbReference type="HAMAP-Rule" id="MF_01216"/>
    </source>
</evidence>
<sequence>MKLLHLDSSILADNSVTRELSAVVADTLRQRHANVETSYRDLAANPIAHLSGEIVGARFAPESDWTATQRSEAALSEQLIEEFIAADVLVIGAPMYNFSIPTQLKSWIDRVAAAGRTFKYTENGPVGLVPNKKVVLVSARGGVHSGEQGSLMDFQEDYVVKVLGFLGVSDVEIIRAEAIGMGPDKRATSIHLAKEAIAKLAL</sequence>
<reference key="1">
    <citation type="journal article" date="2003" name="Proc. Natl. Acad. Sci. U.S.A.">
        <title>The complete genome sequence of Chromobacterium violaceum reveals remarkable and exploitable bacterial adaptability.</title>
        <authorList>
            <person name="Vasconcelos A.T.R."/>
            <person name="de Almeida D.F."/>
            <person name="Hungria M."/>
            <person name="Guimaraes C.T."/>
            <person name="Antonio R.V."/>
            <person name="Almeida F.C."/>
            <person name="de Almeida L.G.P."/>
            <person name="de Almeida R."/>
            <person name="Alves-Gomes J.A."/>
            <person name="Andrade E.M."/>
            <person name="Araripe J."/>
            <person name="de Araujo M.F.F."/>
            <person name="Astolfi-Filho S."/>
            <person name="Azevedo V."/>
            <person name="Baptista A.J."/>
            <person name="Bataus L.A.M."/>
            <person name="Batista J.S."/>
            <person name="Belo A."/>
            <person name="van den Berg C."/>
            <person name="Bogo M."/>
            <person name="Bonatto S."/>
            <person name="Bordignon J."/>
            <person name="Brigido M.M."/>
            <person name="Brito C.A."/>
            <person name="Brocchi M."/>
            <person name="Burity H.A."/>
            <person name="Camargo A.A."/>
            <person name="Cardoso D.D.P."/>
            <person name="Carneiro N.P."/>
            <person name="Carraro D.M."/>
            <person name="Carvalho C.M.B."/>
            <person name="Cascardo J.C.M."/>
            <person name="Cavada B.S."/>
            <person name="Chueire L.M.O."/>
            <person name="Creczynski-Pasa T.B."/>
            <person name="Cunha-Junior N.C."/>
            <person name="Fagundes N."/>
            <person name="Falcao C.L."/>
            <person name="Fantinatti F."/>
            <person name="Farias I.P."/>
            <person name="Felipe M.S.S."/>
            <person name="Ferrari L.P."/>
            <person name="Ferro J.A."/>
            <person name="Ferro M.I.T."/>
            <person name="Franco G.R."/>
            <person name="Freitas N.S.A."/>
            <person name="Furlan L.R."/>
            <person name="Gazzinelli R.T."/>
            <person name="Gomes E.A."/>
            <person name="Goncalves P.R."/>
            <person name="Grangeiro T.B."/>
            <person name="Grattapaglia D."/>
            <person name="Grisard E.C."/>
            <person name="Hanna E.S."/>
            <person name="Jardim S.N."/>
            <person name="Laurino J."/>
            <person name="Leoi L.C.T."/>
            <person name="Lima L.F.A."/>
            <person name="Loureiro M.F."/>
            <person name="Lyra M.C.C.P."/>
            <person name="Madeira H.M.F."/>
            <person name="Manfio G.P."/>
            <person name="Maranhao A.Q."/>
            <person name="Martins W.S."/>
            <person name="di Mauro S.M.Z."/>
            <person name="de Medeiros S.R.B."/>
            <person name="Meissner R.V."/>
            <person name="Moreira M.A.M."/>
            <person name="Nascimento F.F."/>
            <person name="Nicolas M.F."/>
            <person name="Oliveira J.G."/>
            <person name="Oliveira S.C."/>
            <person name="Paixao R.F.C."/>
            <person name="Parente J.A."/>
            <person name="Pedrosa F.O."/>
            <person name="Pena S.D.J."/>
            <person name="Pereira J.O."/>
            <person name="Pereira M."/>
            <person name="Pinto L.S.R.C."/>
            <person name="Pinto L.S."/>
            <person name="Porto J.I.R."/>
            <person name="Potrich D.P."/>
            <person name="Ramalho-Neto C.E."/>
            <person name="Reis A.M.M."/>
            <person name="Rigo L.U."/>
            <person name="Rondinelli E."/>
            <person name="Santos E.B.P."/>
            <person name="Santos F.R."/>
            <person name="Schneider M.P.C."/>
            <person name="Seuanez H.N."/>
            <person name="Silva A.M.R."/>
            <person name="da Silva A.L.C."/>
            <person name="Silva D.W."/>
            <person name="Silva R."/>
            <person name="Simoes I.C."/>
            <person name="Simon D."/>
            <person name="Soares C.M.A."/>
            <person name="Soares R.B.A."/>
            <person name="Souza E.M."/>
            <person name="Souza K.R.L."/>
            <person name="Souza R.C."/>
            <person name="Steffens M.B.R."/>
            <person name="Steindel M."/>
            <person name="Teixeira S.R."/>
            <person name="Urmenyi T."/>
            <person name="Vettore A."/>
            <person name="Wassem R."/>
            <person name="Zaha A."/>
            <person name="Simpson A.J.G."/>
        </authorList>
    </citation>
    <scope>NUCLEOTIDE SEQUENCE [LARGE SCALE GENOMIC DNA]</scope>
    <source>
        <strain>ATCC 12472 / DSM 30191 / JCM 1249 / CCUG 213 / NBRC 12614 / NCIMB 9131 / NCTC 9757 / MK</strain>
    </source>
</reference>
<feature type="chain" id="PRO_0000245911" description="FMN-dependent NADH:quinone oxidoreductase">
    <location>
        <begin position="1"/>
        <end position="202"/>
    </location>
</feature>
<feature type="binding site" evidence="1">
    <location>
        <position position="9"/>
    </location>
    <ligand>
        <name>FMN</name>
        <dbReference type="ChEBI" id="CHEBI:58210"/>
    </ligand>
</feature>
<feature type="binding site" evidence="1">
    <location>
        <begin position="95"/>
        <end position="98"/>
    </location>
    <ligand>
        <name>FMN</name>
        <dbReference type="ChEBI" id="CHEBI:58210"/>
    </ligand>
</feature>
<accession>Q7NWH3</accession>
<name>AZOR_CHRVO</name>